<organism>
    <name type="scientific">Solanum lycopersicum</name>
    <name type="common">Tomato</name>
    <name type="synonym">Lycopersicon esculentum</name>
    <dbReference type="NCBI Taxonomy" id="4081"/>
    <lineage>
        <taxon>Eukaryota</taxon>
        <taxon>Viridiplantae</taxon>
        <taxon>Streptophyta</taxon>
        <taxon>Embryophyta</taxon>
        <taxon>Tracheophyta</taxon>
        <taxon>Spermatophyta</taxon>
        <taxon>Magnoliopsida</taxon>
        <taxon>eudicotyledons</taxon>
        <taxon>Gunneridae</taxon>
        <taxon>Pentapetalae</taxon>
        <taxon>asterids</taxon>
        <taxon>lamiids</taxon>
        <taxon>Solanales</taxon>
        <taxon>Solanaceae</taxon>
        <taxon>Solanoideae</taxon>
        <taxon>Solaneae</taxon>
        <taxon>Solanum</taxon>
        <taxon>Solanum subgen. Lycopersicon</taxon>
    </lineage>
</organism>
<comment type="function">
    <text evidence="2 4">Phytoglobin that reduces nitrite to nitric oxide (NO) under anoxic conditions (e.g. during flooding or in waterlogged soil) (By similarity). May not function as an oxygen storage or transport protein (By similarity). Has an unusually high affinity for O(2) through an hexacoordinate heme iron because of a very low dissociation constant (By similarity).</text>
</comment>
<comment type="catalytic activity">
    <reaction evidence="2">
        <text>Fe(III)-heme b-[protein] + nitric oxide + H2O = Fe(II)-heme b-[protein] + nitrite + 2 H(+)</text>
        <dbReference type="Rhea" id="RHEA:77711"/>
        <dbReference type="Rhea" id="RHEA-COMP:18975"/>
        <dbReference type="Rhea" id="RHEA-COMP:18976"/>
        <dbReference type="ChEBI" id="CHEBI:15377"/>
        <dbReference type="ChEBI" id="CHEBI:15378"/>
        <dbReference type="ChEBI" id="CHEBI:16301"/>
        <dbReference type="ChEBI" id="CHEBI:16480"/>
        <dbReference type="ChEBI" id="CHEBI:55376"/>
        <dbReference type="ChEBI" id="CHEBI:60344"/>
    </reaction>
    <physiologicalReaction direction="right-to-left" evidence="2">
        <dbReference type="Rhea" id="RHEA:77713"/>
    </physiologicalReaction>
</comment>
<comment type="cofactor">
    <cofactor evidence="3">
        <name>heme b</name>
        <dbReference type="ChEBI" id="CHEBI:60344"/>
    </cofactor>
    <text evidence="3">Binds 1 heme group per subunit.</text>
</comment>
<comment type="subunit">
    <text evidence="2">Homodimer.</text>
</comment>
<comment type="subcellular location">
    <subcellularLocation>
        <location evidence="1">Cytoplasm</location>
    </subcellularLocation>
    <subcellularLocation>
        <location evidence="1">Nucleus</location>
    </subcellularLocation>
</comment>
<comment type="similarity">
    <text evidence="7">Belongs to the plant globin family.</text>
</comment>
<dbReference type="EC" id="1.7.2.-" evidence="2"/>
<dbReference type="EMBL" id="AY026344">
    <property type="protein sequence ID" value="AAK07677.1"/>
    <property type="molecule type" value="mRNA"/>
</dbReference>
<dbReference type="RefSeq" id="NP_001234111.1">
    <property type="nucleotide sequence ID" value="NM_001247182.2"/>
</dbReference>
<dbReference type="SMR" id="Q941P9"/>
<dbReference type="FunCoup" id="Q941P9">
    <property type="interactions" value="187"/>
</dbReference>
<dbReference type="STRING" id="4081.Q941P9"/>
<dbReference type="PaxDb" id="4081-Solyc03g071690.2.1"/>
<dbReference type="GeneID" id="543822"/>
<dbReference type="KEGG" id="sly:543822"/>
<dbReference type="eggNOG" id="KOG3378">
    <property type="taxonomic scope" value="Eukaryota"/>
</dbReference>
<dbReference type="HOGENOM" id="CLU_003827_11_2_1"/>
<dbReference type="InParanoid" id="Q941P9"/>
<dbReference type="OrthoDB" id="436496at2759"/>
<dbReference type="PhylomeDB" id="Q941P9"/>
<dbReference type="Proteomes" id="UP000004994">
    <property type="component" value="Unplaced"/>
</dbReference>
<dbReference type="GO" id="GO:0005737">
    <property type="term" value="C:cytoplasm"/>
    <property type="evidence" value="ECO:0007669"/>
    <property type="project" value="UniProtKB-SubCell"/>
</dbReference>
<dbReference type="GO" id="GO:0005634">
    <property type="term" value="C:nucleus"/>
    <property type="evidence" value="ECO:0007669"/>
    <property type="project" value="UniProtKB-SubCell"/>
</dbReference>
<dbReference type="GO" id="GO:0020037">
    <property type="term" value="F:heme binding"/>
    <property type="evidence" value="ECO:0007669"/>
    <property type="project" value="InterPro"/>
</dbReference>
<dbReference type="GO" id="GO:0046872">
    <property type="term" value="F:metal ion binding"/>
    <property type="evidence" value="ECO:0007669"/>
    <property type="project" value="UniProtKB-KW"/>
</dbReference>
<dbReference type="GO" id="GO:0016491">
    <property type="term" value="F:oxidoreductase activity"/>
    <property type="evidence" value="ECO:0007669"/>
    <property type="project" value="UniProtKB-KW"/>
</dbReference>
<dbReference type="GO" id="GO:0019825">
    <property type="term" value="F:oxygen binding"/>
    <property type="evidence" value="ECO:0007669"/>
    <property type="project" value="InterPro"/>
</dbReference>
<dbReference type="CDD" id="cd08923">
    <property type="entry name" value="class1-2_nsHbs_Lbs"/>
    <property type="match status" value="1"/>
</dbReference>
<dbReference type="Gene3D" id="1.10.490.10">
    <property type="entry name" value="Globins"/>
    <property type="match status" value="1"/>
</dbReference>
<dbReference type="InterPro" id="IPR000971">
    <property type="entry name" value="Globin"/>
</dbReference>
<dbReference type="InterPro" id="IPR009050">
    <property type="entry name" value="Globin-like_sf"/>
</dbReference>
<dbReference type="InterPro" id="IPR012292">
    <property type="entry name" value="Globin/Proto"/>
</dbReference>
<dbReference type="InterPro" id="IPR001032">
    <property type="entry name" value="Leghaemoglobin-like"/>
</dbReference>
<dbReference type="InterPro" id="IPR019824">
    <property type="entry name" value="Leghaemoglobin_Fe_BS"/>
</dbReference>
<dbReference type="PANTHER" id="PTHR22924">
    <property type="entry name" value="LEGHEMOGLOBIN-RELATED"/>
    <property type="match status" value="1"/>
</dbReference>
<dbReference type="PANTHER" id="PTHR22924:SF92">
    <property type="entry name" value="NON-SYMBIOTIC HEMOGLOBIN 2"/>
    <property type="match status" value="1"/>
</dbReference>
<dbReference type="Pfam" id="PF00042">
    <property type="entry name" value="Globin"/>
    <property type="match status" value="1"/>
</dbReference>
<dbReference type="PRINTS" id="PR00188">
    <property type="entry name" value="PLANTGLOBIN"/>
</dbReference>
<dbReference type="SUPFAM" id="SSF46458">
    <property type="entry name" value="Globin-like"/>
    <property type="match status" value="1"/>
</dbReference>
<dbReference type="PROSITE" id="PS01033">
    <property type="entry name" value="GLOBIN"/>
    <property type="match status" value="1"/>
</dbReference>
<dbReference type="PROSITE" id="PS00208">
    <property type="entry name" value="PLANT_GLOBIN"/>
    <property type="match status" value="1"/>
</dbReference>
<gene>
    <name evidence="6" type="primary">HB2</name>
    <name evidence="6" type="synonym">GLB2</name>
</gene>
<keyword id="KW-0963">Cytoplasm</keyword>
<keyword id="KW-0349">Heme</keyword>
<keyword id="KW-0408">Iron</keyword>
<keyword id="KW-0479">Metal-binding</keyword>
<keyword id="KW-0539">Nucleus</keyword>
<keyword id="KW-0560">Oxidoreductase</keyword>
<keyword id="KW-1185">Reference proteome</keyword>
<name>HBL2_SOLLC</name>
<evidence type="ECO:0000250" key="1">
    <source>
        <dbReference type="UniProtKB" id="A2XE98"/>
    </source>
</evidence>
<evidence type="ECO:0000250" key="2">
    <source>
        <dbReference type="UniProtKB" id="O04986"/>
    </source>
</evidence>
<evidence type="ECO:0000250" key="3">
    <source>
        <dbReference type="UniProtKB" id="P68168"/>
    </source>
</evidence>
<evidence type="ECO:0000250" key="4">
    <source>
        <dbReference type="UniProtKB" id="Q42831"/>
    </source>
</evidence>
<evidence type="ECO:0000255" key="5">
    <source>
        <dbReference type="PROSITE-ProRule" id="PRU00238"/>
    </source>
</evidence>
<evidence type="ECO:0000303" key="6">
    <source>
    </source>
</evidence>
<evidence type="ECO:0000305" key="7"/>
<sequence>MGFTDKQEALVRDSWEFMKQDIPQLSLRFFSLILEIAPVAKNMFSFLKDSDELPENNPKLRAHAVKVFKMTCESAIQLREKGEVVVGETTLKYLGSIHLQKRVADPHFEVVKEALLRTVKEATGNKWKDEMKEAWSEAYDQLASAIKAEMHAEAAA</sequence>
<accession>Q941P9</accession>
<reference key="1">
    <citation type="journal article" date="2001" name="Plant Mol. Biol.">
        <title>Expression and evolution of functionally distinct haemoglobin genes in plants.</title>
        <authorList>
            <person name="Hunt P.W."/>
            <person name="Watts R.A."/>
            <person name="Trevaskis B."/>
            <person name="Llewellyn D.J."/>
            <person name="Burnell J."/>
            <person name="Dennis E.S."/>
            <person name="Peacock W.J."/>
        </authorList>
    </citation>
    <scope>NUCLEOTIDE SEQUENCE [MRNA]</scope>
</reference>
<feature type="chain" id="PRO_0000193017" description="Anaerobic nitrite reductase HB2">
    <location>
        <begin position="1"/>
        <end position="156"/>
    </location>
</feature>
<feature type="domain" description="Globin" evidence="5">
    <location>
        <begin position="2"/>
        <end position="151"/>
    </location>
</feature>
<feature type="short sequence motif" description="Homodimerization" evidence="2">
    <location>
        <begin position="35"/>
        <end position="39"/>
    </location>
</feature>
<feature type="short sequence motif" description="Homodimerization" evidence="2">
    <location>
        <begin position="105"/>
        <end position="117"/>
    </location>
</feature>
<feature type="binding site" evidence="3">
    <location>
        <position position="45"/>
    </location>
    <ligand>
        <name>heme b</name>
        <dbReference type="ChEBI" id="CHEBI:60344"/>
    </ligand>
</feature>
<feature type="binding site" evidence="2">
    <location>
        <position position="59"/>
    </location>
    <ligand>
        <name>heme b</name>
        <dbReference type="ChEBI" id="CHEBI:60344"/>
    </ligand>
</feature>
<feature type="binding site" description="distal binding residue" evidence="5">
    <location>
        <position position="63"/>
    </location>
    <ligand>
        <name>heme b</name>
        <dbReference type="ChEBI" id="CHEBI:60344"/>
    </ligand>
    <ligandPart>
        <name>Fe</name>
        <dbReference type="ChEBI" id="CHEBI:18248"/>
    </ligandPart>
</feature>
<feature type="binding site" description="proximal binding residue" evidence="5">
    <location>
        <position position="98"/>
    </location>
    <ligand>
        <name>heme b</name>
        <dbReference type="ChEBI" id="CHEBI:60344"/>
    </ligand>
    <ligandPart>
        <name>Fe</name>
        <dbReference type="ChEBI" id="CHEBI:18248"/>
    </ligandPart>
</feature>
<feature type="site" description="Homodimerization" evidence="2">
    <location>
        <position position="132"/>
    </location>
</feature>
<proteinExistence type="evidence at transcript level"/>
<protein>
    <recommendedName>
        <fullName evidence="2">Anaerobic nitrite reductase HB2</fullName>
        <ecNumber evidence="2">1.7.2.-</ecNumber>
    </recommendedName>
    <alternativeName>
        <fullName>Non-symbiotic hemoglobin 2</fullName>
        <shortName evidence="6">Hb2</shortName>
    </alternativeName>
    <alternativeName>
        <fullName evidence="6">SOLly GLB2</fullName>
    </alternativeName>
</protein>